<keyword id="KW-0963">Cytoplasm</keyword>
<keyword id="KW-0342">GTP-binding</keyword>
<keyword id="KW-0378">Hydrolase</keyword>
<keyword id="KW-0460">Magnesium</keyword>
<keyword id="KW-0479">Metal-binding</keyword>
<keyword id="KW-0547">Nucleotide-binding</keyword>
<keyword id="KW-1185">Reference proteome</keyword>
<sequence>MKFIDEARIEVIAGDGGDGSASMRREKFVPFGGPDGGDGGRGGSVYVIADRNINTLIDYRYAKKHMARNGENGRGSDCYGKGGDDITLRMPVGTVINDMDTGELIADLTEHDQKVLVAKGGAGGLGNLHFKSSTNRAPRQKTDGKPGERRMLKLELKVLADVGLLGMPNAGKSTFISSVSNAKPKIADYPFTTLAPNLGVVRVGPGKSFVIADIPGLIEGAAEGAGLGHQFLRHLQRTGLLLHLVDLAPFDERVDPVAEARAIVGELRKYDESLYEKPRWLVLNKLDMVPEDERRARVADFIERFGWTGPVFEISALTGQGCEGLVYAIHDYLVEHSDAHRAELAEDLASDVRFRDAPGAGGEPHERDAGAH</sequence>
<dbReference type="EC" id="3.6.5.-" evidence="1"/>
<dbReference type="EMBL" id="CP000010">
    <property type="protein sequence ID" value="AAU50093.1"/>
    <property type="molecule type" value="Genomic_DNA"/>
</dbReference>
<dbReference type="RefSeq" id="YP_104067.1">
    <property type="nucleotide sequence ID" value="NC_006348.1"/>
</dbReference>
<dbReference type="SMR" id="Q62GV4"/>
<dbReference type="KEGG" id="bma:BMA2521"/>
<dbReference type="PATRIC" id="fig|243160.12.peg.2601"/>
<dbReference type="eggNOG" id="COG0536">
    <property type="taxonomic scope" value="Bacteria"/>
</dbReference>
<dbReference type="HOGENOM" id="CLU_011747_2_0_4"/>
<dbReference type="Proteomes" id="UP000006693">
    <property type="component" value="Chromosome 1"/>
</dbReference>
<dbReference type="GO" id="GO:0005737">
    <property type="term" value="C:cytoplasm"/>
    <property type="evidence" value="ECO:0007669"/>
    <property type="project" value="UniProtKB-SubCell"/>
</dbReference>
<dbReference type="GO" id="GO:0005525">
    <property type="term" value="F:GTP binding"/>
    <property type="evidence" value="ECO:0007669"/>
    <property type="project" value="UniProtKB-UniRule"/>
</dbReference>
<dbReference type="GO" id="GO:0003924">
    <property type="term" value="F:GTPase activity"/>
    <property type="evidence" value="ECO:0007669"/>
    <property type="project" value="UniProtKB-UniRule"/>
</dbReference>
<dbReference type="GO" id="GO:0000287">
    <property type="term" value="F:magnesium ion binding"/>
    <property type="evidence" value="ECO:0007669"/>
    <property type="project" value="InterPro"/>
</dbReference>
<dbReference type="GO" id="GO:0042254">
    <property type="term" value="P:ribosome biogenesis"/>
    <property type="evidence" value="ECO:0007669"/>
    <property type="project" value="UniProtKB-UniRule"/>
</dbReference>
<dbReference type="CDD" id="cd01898">
    <property type="entry name" value="Obg"/>
    <property type="match status" value="1"/>
</dbReference>
<dbReference type="FunFam" id="2.70.210.12:FF:000001">
    <property type="entry name" value="GTPase Obg"/>
    <property type="match status" value="1"/>
</dbReference>
<dbReference type="Gene3D" id="2.70.210.12">
    <property type="entry name" value="GTP1/OBG domain"/>
    <property type="match status" value="1"/>
</dbReference>
<dbReference type="Gene3D" id="3.40.50.300">
    <property type="entry name" value="P-loop containing nucleotide triphosphate hydrolases"/>
    <property type="match status" value="1"/>
</dbReference>
<dbReference type="HAMAP" id="MF_01454">
    <property type="entry name" value="GTPase_Obg"/>
    <property type="match status" value="1"/>
</dbReference>
<dbReference type="InterPro" id="IPR031167">
    <property type="entry name" value="G_OBG"/>
</dbReference>
<dbReference type="InterPro" id="IPR006073">
    <property type="entry name" value="GTP-bd"/>
</dbReference>
<dbReference type="InterPro" id="IPR014100">
    <property type="entry name" value="GTP-bd_Obg/CgtA"/>
</dbReference>
<dbReference type="InterPro" id="IPR006074">
    <property type="entry name" value="GTP1-OBG_CS"/>
</dbReference>
<dbReference type="InterPro" id="IPR006169">
    <property type="entry name" value="GTP1_OBG_dom"/>
</dbReference>
<dbReference type="InterPro" id="IPR036726">
    <property type="entry name" value="GTP1_OBG_dom_sf"/>
</dbReference>
<dbReference type="InterPro" id="IPR045086">
    <property type="entry name" value="OBG_GTPase"/>
</dbReference>
<dbReference type="InterPro" id="IPR027417">
    <property type="entry name" value="P-loop_NTPase"/>
</dbReference>
<dbReference type="NCBIfam" id="TIGR02729">
    <property type="entry name" value="Obg_CgtA"/>
    <property type="match status" value="1"/>
</dbReference>
<dbReference type="NCBIfam" id="NF008954">
    <property type="entry name" value="PRK12296.1"/>
    <property type="match status" value="1"/>
</dbReference>
<dbReference type="NCBIfam" id="NF008955">
    <property type="entry name" value="PRK12297.1"/>
    <property type="match status" value="1"/>
</dbReference>
<dbReference type="NCBIfam" id="NF008956">
    <property type="entry name" value="PRK12299.1"/>
    <property type="match status" value="1"/>
</dbReference>
<dbReference type="PANTHER" id="PTHR11702">
    <property type="entry name" value="DEVELOPMENTALLY REGULATED GTP-BINDING PROTEIN-RELATED"/>
    <property type="match status" value="1"/>
</dbReference>
<dbReference type="PANTHER" id="PTHR11702:SF31">
    <property type="entry name" value="MITOCHONDRIAL RIBOSOME-ASSOCIATED GTPASE 2"/>
    <property type="match status" value="1"/>
</dbReference>
<dbReference type="Pfam" id="PF01018">
    <property type="entry name" value="GTP1_OBG"/>
    <property type="match status" value="1"/>
</dbReference>
<dbReference type="Pfam" id="PF01926">
    <property type="entry name" value="MMR_HSR1"/>
    <property type="match status" value="1"/>
</dbReference>
<dbReference type="PIRSF" id="PIRSF002401">
    <property type="entry name" value="GTP_bd_Obg/CgtA"/>
    <property type="match status" value="1"/>
</dbReference>
<dbReference type="PRINTS" id="PR00326">
    <property type="entry name" value="GTP1OBG"/>
</dbReference>
<dbReference type="SUPFAM" id="SSF82051">
    <property type="entry name" value="Obg GTP-binding protein N-terminal domain"/>
    <property type="match status" value="1"/>
</dbReference>
<dbReference type="SUPFAM" id="SSF52540">
    <property type="entry name" value="P-loop containing nucleoside triphosphate hydrolases"/>
    <property type="match status" value="1"/>
</dbReference>
<dbReference type="PROSITE" id="PS51710">
    <property type="entry name" value="G_OBG"/>
    <property type="match status" value="1"/>
</dbReference>
<dbReference type="PROSITE" id="PS00905">
    <property type="entry name" value="GTP1_OBG"/>
    <property type="match status" value="1"/>
</dbReference>
<dbReference type="PROSITE" id="PS51883">
    <property type="entry name" value="OBG"/>
    <property type="match status" value="1"/>
</dbReference>
<reference key="1">
    <citation type="journal article" date="2004" name="Proc. Natl. Acad. Sci. U.S.A.">
        <title>Structural flexibility in the Burkholderia mallei genome.</title>
        <authorList>
            <person name="Nierman W.C."/>
            <person name="DeShazer D."/>
            <person name="Kim H.S."/>
            <person name="Tettelin H."/>
            <person name="Nelson K.E."/>
            <person name="Feldblyum T.V."/>
            <person name="Ulrich R.L."/>
            <person name="Ronning C.M."/>
            <person name="Brinkac L.M."/>
            <person name="Daugherty S.C."/>
            <person name="Davidsen T.D."/>
            <person name="DeBoy R.T."/>
            <person name="Dimitrov G."/>
            <person name="Dodson R.J."/>
            <person name="Durkin A.S."/>
            <person name="Gwinn M.L."/>
            <person name="Haft D.H."/>
            <person name="Khouri H.M."/>
            <person name="Kolonay J.F."/>
            <person name="Madupu R."/>
            <person name="Mohammoud Y."/>
            <person name="Nelson W.C."/>
            <person name="Radune D."/>
            <person name="Romero C.M."/>
            <person name="Sarria S."/>
            <person name="Selengut J."/>
            <person name="Shamblin C."/>
            <person name="Sullivan S.A."/>
            <person name="White O."/>
            <person name="Yu Y."/>
            <person name="Zafar N."/>
            <person name="Zhou L."/>
            <person name="Fraser C.M."/>
        </authorList>
    </citation>
    <scope>NUCLEOTIDE SEQUENCE [LARGE SCALE GENOMIC DNA]</scope>
    <source>
        <strain>ATCC 23344</strain>
    </source>
</reference>
<organism>
    <name type="scientific">Burkholderia mallei (strain ATCC 23344)</name>
    <dbReference type="NCBI Taxonomy" id="243160"/>
    <lineage>
        <taxon>Bacteria</taxon>
        <taxon>Pseudomonadati</taxon>
        <taxon>Pseudomonadota</taxon>
        <taxon>Betaproteobacteria</taxon>
        <taxon>Burkholderiales</taxon>
        <taxon>Burkholderiaceae</taxon>
        <taxon>Burkholderia</taxon>
        <taxon>pseudomallei group</taxon>
    </lineage>
</organism>
<feature type="chain" id="PRO_0000385782" description="GTPase Obg">
    <location>
        <begin position="1"/>
        <end position="372"/>
    </location>
</feature>
<feature type="domain" description="Obg" evidence="2">
    <location>
        <begin position="1"/>
        <end position="159"/>
    </location>
</feature>
<feature type="domain" description="OBG-type G" evidence="1">
    <location>
        <begin position="160"/>
        <end position="334"/>
    </location>
</feature>
<feature type="region of interest" description="Disordered" evidence="3">
    <location>
        <begin position="128"/>
        <end position="147"/>
    </location>
</feature>
<feature type="binding site" evidence="1">
    <location>
        <begin position="166"/>
        <end position="173"/>
    </location>
    <ligand>
        <name>GTP</name>
        <dbReference type="ChEBI" id="CHEBI:37565"/>
    </ligand>
</feature>
<feature type="binding site" evidence="1">
    <location>
        <position position="173"/>
    </location>
    <ligand>
        <name>Mg(2+)</name>
        <dbReference type="ChEBI" id="CHEBI:18420"/>
    </ligand>
</feature>
<feature type="binding site" evidence="1">
    <location>
        <begin position="191"/>
        <end position="195"/>
    </location>
    <ligand>
        <name>GTP</name>
        <dbReference type="ChEBI" id="CHEBI:37565"/>
    </ligand>
</feature>
<feature type="binding site" evidence="1">
    <location>
        <position position="193"/>
    </location>
    <ligand>
        <name>Mg(2+)</name>
        <dbReference type="ChEBI" id="CHEBI:18420"/>
    </ligand>
</feature>
<feature type="binding site" evidence="1">
    <location>
        <begin position="213"/>
        <end position="216"/>
    </location>
    <ligand>
        <name>GTP</name>
        <dbReference type="ChEBI" id="CHEBI:37565"/>
    </ligand>
</feature>
<feature type="binding site" evidence="1">
    <location>
        <begin position="284"/>
        <end position="287"/>
    </location>
    <ligand>
        <name>GTP</name>
        <dbReference type="ChEBI" id="CHEBI:37565"/>
    </ligand>
</feature>
<feature type="binding site" evidence="1">
    <location>
        <begin position="315"/>
        <end position="317"/>
    </location>
    <ligand>
        <name>GTP</name>
        <dbReference type="ChEBI" id="CHEBI:37565"/>
    </ligand>
</feature>
<gene>
    <name evidence="1" type="primary">obg</name>
    <name type="ordered locus">BMA2521</name>
</gene>
<protein>
    <recommendedName>
        <fullName evidence="1">GTPase Obg</fullName>
        <ecNumber evidence="1">3.6.5.-</ecNumber>
    </recommendedName>
    <alternativeName>
        <fullName evidence="1">GTP-binding protein Obg</fullName>
    </alternativeName>
</protein>
<proteinExistence type="inferred from homology"/>
<name>OBG_BURMA</name>
<accession>Q62GV4</accession>
<evidence type="ECO:0000255" key="1">
    <source>
        <dbReference type="HAMAP-Rule" id="MF_01454"/>
    </source>
</evidence>
<evidence type="ECO:0000255" key="2">
    <source>
        <dbReference type="PROSITE-ProRule" id="PRU01231"/>
    </source>
</evidence>
<evidence type="ECO:0000256" key="3">
    <source>
        <dbReference type="SAM" id="MobiDB-lite"/>
    </source>
</evidence>
<comment type="function">
    <text evidence="1">An essential GTPase which binds GTP, GDP and possibly (p)ppGpp with moderate affinity, with high nucleotide exchange rates and a fairly low GTP hydrolysis rate. Plays a role in control of the cell cycle, stress response, ribosome biogenesis and in those bacteria that undergo differentiation, in morphogenesis control.</text>
</comment>
<comment type="cofactor">
    <cofactor evidence="1">
        <name>Mg(2+)</name>
        <dbReference type="ChEBI" id="CHEBI:18420"/>
    </cofactor>
</comment>
<comment type="subunit">
    <text evidence="1">Monomer.</text>
</comment>
<comment type="subcellular location">
    <subcellularLocation>
        <location evidence="1">Cytoplasm</location>
    </subcellularLocation>
</comment>
<comment type="similarity">
    <text evidence="1">Belongs to the TRAFAC class OBG-HflX-like GTPase superfamily. OBG GTPase family.</text>
</comment>